<proteinExistence type="inferred from homology"/>
<comment type="function">
    <text evidence="1">Produces ATP from ADP in the presence of a proton gradient across the membrane.</text>
</comment>
<comment type="similarity">
    <text evidence="1">Belongs to the V-ATPase D subunit family.</text>
</comment>
<evidence type="ECO:0000255" key="1">
    <source>
        <dbReference type="HAMAP-Rule" id="MF_00271"/>
    </source>
</evidence>
<name>VATD_CLOBM</name>
<accession>B1KXT4</accession>
<reference key="1">
    <citation type="journal article" date="2007" name="PLoS ONE">
        <title>Analysis of the neurotoxin complex genes in Clostridium botulinum A1-A4 and B1 strains: BoNT/A3, /Ba4 and /B1 clusters are located within plasmids.</title>
        <authorList>
            <person name="Smith T.J."/>
            <person name="Hill K.K."/>
            <person name="Foley B.T."/>
            <person name="Detter J.C."/>
            <person name="Munk A.C."/>
            <person name="Bruce D.C."/>
            <person name="Doggett N.A."/>
            <person name="Smith L.A."/>
            <person name="Marks J.D."/>
            <person name="Xie G."/>
            <person name="Brettin T.S."/>
        </authorList>
    </citation>
    <scope>NUCLEOTIDE SEQUENCE [LARGE SCALE GENOMIC DNA]</scope>
    <source>
        <strain>Loch Maree / Type A3</strain>
    </source>
</reference>
<protein>
    <recommendedName>
        <fullName evidence="1">V-type ATP synthase subunit D</fullName>
    </recommendedName>
    <alternativeName>
        <fullName evidence="1">V-ATPase subunit D</fullName>
    </alternativeName>
</protein>
<sequence>MKLNVNPTRMELTKLKKRLTTATRGHKLLKDKQDELMRRFIGMIKKNNELRKDVEKELEGSFKDFLMASAVMSPEFLEEAVAYPKESISVDVKKQNIMSVNVPVFDFKRKLEGDKGSIFPYGFANTSAELDGAIEKLYGILPKLLELAKVEKACQLMADEIEKTRRRVNALEYMTIPQLEETIRFIQMKLDENERSTVTRLMKIKSMMEEKQSNMV</sequence>
<dbReference type="EMBL" id="CP000962">
    <property type="protein sequence ID" value="ACA55193.1"/>
    <property type="molecule type" value="Genomic_DNA"/>
</dbReference>
<dbReference type="RefSeq" id="WP_003401356.1">
    <property type="nucleotide sequence ID" value="NC_010520.1"/>
</dbReference>
<dbReference type="SMR" id="B1KXT4"/>
<dbReference type="KEGG" id="cbl:CLK_2009"/>
<dbReference type="HOGENOM" id="CLU_069688_2_1_9"/>
<dbReference type="GO" id="GO:0005524">
    <property type="term" value="F:ATP binding"/>
    <property type="evidence" value="ECO:0007669"/>
    <property type="project" value="UniProtKB-UniRule"/>
</dbReference>
<dbReference type="GO" id="GO:0046933">
    <property type="term" value="F:proton-transporting ATP synthase activity, rotational mechanism"/>
    <property type="evidence" value="ECO:0007669"/>
    <property type="project" value="UniProtKB-UniRule"/>
</dbReference>
<dbReference type="GO" id="GO:0046961">
    <property type="term" value="F:proton-transporting ATPase activity, rotational mechanism"/>
    <property type="evidence" value="ECO:0007669"/>
    <property type="project" value="InterPro"/>
</dbReference>
<dbReference type="GO" id="GO:0042777">
    <property type="term" value="P:proton motive force-driven plasma membrane ATP synthesis"/>
    <property type="evidence" value="ECO:0007669"/>
    <property type="project" value="UniProtKB-UniRule"/>
</dbReference>
<dbReference type="FunFam" id="1.10.287.3240:FF:000007">
    <property type="entry name" value="V-type ATP synthase subunit D"/>
    <property type="match status" value="1"/>
</dbReference>
<dbReference type="Gene3D" id="1.10.287.3240">
    <property type="match status" value="1"/>
</dbReference>
<dbReference type="HAMAP" id="MF_00271">
    <property type="entry name" value="ATP_synth_D_arch"/>
    <property type="match status" value="1"/>
</dbReference>
<dbReference type="InterPro" id="IPR002699">
    <property type="entry name" value="V_ATPase_D"/>
</dbReference>
<dbReference type="NCBIfam" id="NF001543">
    <property type="entry name" value="PRK00373.1-2"/>
    <property type="match status" value="1"/>
</dbReference>
<dbReference type="NCBIfam" id="TIGR00309">
    <property type="entry name" value="V_ATPase_subD"/>
    <property type="match status" value="1"/>
</dbReference>
<dbReference type="PANTHER" id="PTHR11671">
    <property type="entry name" value="V-TYPE ATP SYNTHASE SUBUNIT D"/>
    <property type="match status" value="1"/>
</dbReference>
<dbReference type="Pfam" id="PF01813">
    <property type="entry name" value="ATP-synt_D"/>
    <property type="match status" value="1"/>
</dbReference>
<keyword id="KW-0066">ATP synthesis</keyword>
<keyword id="KW-0375">Hydrogen ion transport</keyword>
<keyword id="KW-0406">Ion transport</keyword>
<keyword id="KW-0813">Transport</keyword>
<feature type="chain" id="PRO_1000114479" description="V-type ATP synthase subunit D">
    <location>
        <begin position="1"/>
        <end position="216"/>
    </location>
</feature>
<organism>
    <name type="scientific">Clostridium botulinum (strain Loch Maree / Type A3)</name>
    <dbReference type="NCBI Taxonomy" id="498214"/>
    <lineage>
        <taxon>Bacteria</taxon>
        <taxon>Bacillati</taxon>
        <taxon>Bacillota</taxon>
        <taxon>Clostridia</taxon>
        <taxon>Eubacteriales</taxon>
        <taxon>Clostridiaceae</taxon>
        <taxon>Clostridium</taxon>
    </lineage>
</organism>
<gene>
    <name evidence="1" type="primary">atpD</name>
    <name type="ordered locus">CLK_2009</name>
</gene>